<evidence type="ECO:0000255" key="1">
    <source>
        <dbReference type="HAMAP-Rule" id="MF_00225"/>
    </source>
</evidence>
<comment type="function">
    <text evidence="1">Catalyzes the conversion of dihydroorotate to orotate with quinone as electron acceptor.</text>
</comment>
<comment type="catalytic activity">
    <reaction evidence="1">
        <text>(S)-dihydroorotate + a quinone = orotate + a quinol</text>
        <dbReference type="Rhea" id="RHEA:30187"/>
        <dbReference type="ChEBI" id="CHEBI:24646"/>
        <dbReference type="ChEBI" id="CHEBI:30839"/>
        <dbReference type="ChEBI" id="CHEBI:30864"/>
        <dbReference type="ChEBI" id="CHEBI:132124"/>
        <dbReference type="EC" id="1.3.5.2"/>
    </reaction>
</comment>
<comment type="cofactor">
    <cofactor evidence="1">
        <name>FMN</name>
        <dbReference type="ChEBI" id="CHEBI:58210"/>
    </cofactor>
    <text evidence="1">Binds 1 FMN per subunit.</text>
</comment>
<comment type="pathway">
    <text evidence="1">Pyrimidine metabolism; UMP biosynthesis via de novo pathway; orotate from (S)-dihydroorotate (quinone route): step 1/1.</text>
</comment>
<comment type="subunit">
    <text evidence="1">Monomer.</text>
</comment>
<comment type="subcellular location">
    <subcellularLocation>
        <location evidence="1">Cell membrane</location>
        <topology evidence="1">Peripheral membrane protein</topology>
    </subcellularLocation>
</comment>
<comment type="similarity">
    <text evidence="1">Belongs to the dihydroorotate dehydrogenase family. Type 2 subfamily.</text>
</comment>
<keyword id="KW-1003">Cell membrane</keyword>
<keyword id="KW-0285">Flavoprotein</keyword>
<keyword id="KW-0288">FMN</keyword>
<keyword id="KW-0472">Membrane</keyword>
<keyword id="KW-0560">Oxidoreductase</keyword>
<keyword id="KW-0665">Pyrimidine biosynthesis</keyword>
<keyword id="KW-1185">Reference proteome</keyword>
<organism>
    <name type="scientific">Shewanella baltica (strain OS155 / ATCC BAA-1091)</name>
    <dbReference type="NCBI Taxonomy" id="325240"/>
    <lineage>
        <taxon>Bacteria</taxon>
        <taxon>Pseudomonadati</taxon>
        <taxon>Pseudomonadota</taxon>
        <taxon>Gammaproteobacteria</taxon>
        <taxon>Alteromonadales</taxon>
        <taxon>Shewanellaceae</taxon>
        <taxon>Shewanella</taxon>
    </lineage>
</organism>
<proteinExistence type="inferred from homology"/>
<accession>A3D5B9</accession>
<sequence length="339" mass="36527">MFYKIAQKVMFQMDPERAHHLAIGSLKMTANSPLTCLYGQTIAPAPVSVMGLTFPNPVGLAAGMDKDGESIDAFHAMGFGHVEVGTVTPRPQPGNDLPRLFRLKPAKGIINRMGFNNKGVDNLVKNLIAKKTDIMVGVNIGKNKDTPVEQGKDDYLICMDKVYLHAAYIAVNISSPNTPGLRSLQYGDLLDELLSAIKTKQLELAEKHKKYVPIALKIAPDLTIEEIENIAQALIKNKFDGAIATNTTLTRDGVSGLANANESGGLSGKPLTELSIKVIKQLAICLKGQIPIIGVGGINSADDALAKFDAGATMVQIYSGFIYQGPKLIKEIVNAYRLK</sequence>
<name>PYRD_SHEB5</name>
<dbReference type="EC" id="1.3.5.2" evidence="1"/>
<dbReference type="EMBL" id="CP000563">
    <property type="protein sequence ID" value="ABN61932.1"/>
    <property type="molecule type" value="Genomic_DNA"/>
</dbReference>
<dbReference type="RefSeq" id="WP_011846979.1">
    <property type="nucleotide sequence ID" value="NC_009052.1"/>
</dbReference>
<dbReference type="SMR" id="A3D5B9"/>
<dbReference type="STRING" id="325240.Sbal_2439"/>
<dbReference type="KEGG" id="sbl:Sbal_2439"/>
<dbReference type="HOGENOM" id="CLU_013640_2_0_6"/>
<dbReference type="OrthoDB" id="9802377at2"/>
<dbReference type="UniPathway" id="UPA00070">
    <property type="reaction ID" value="UER00946"/>
</dbReference>
<dbReference type="Proteomes" id="UP000001557">
    <property type="component" value="Chromosome"/>
</dbReference>
<dbReference type="GO" id="GO:0005737">
    <property type="term" value="C:cytoplasm"/>
    <property type="evidence" value="ECO:0007669"/>
    <property type="project" value="InterPro"/>
</dbReference>
<dbReference type="GO" id="GO:0005886">
    <property type="term" value="C:plasma membrane"/>
    <property type="evidence" value="ECO:0007669"/>
    <property type="project" value="UniProtKB-SubCell"/>
</dbReference>
<dbReference type="GO" id="GO:0106430">
    <property type="term" value="F:dihydroorotate dehydrogenase (quinone) activity"/>
    <property type="evidence" value="ECO:0007669"/>
    <property type="project" value="UniProtKB-EC"/>
</dbReference>
<dbReference type="GO" id="GO:0006207">
    <property type="term" value="P:'de novo' pyrimidine nucleobase biosynthetic process"/>
    <property type="evidence" value="ECO:0007669"/>
    <property type="project" value="InterPro"/>
</dbReference>
<dbReference type="GO" id="GO:0044205">
    <property type="term" value="P:'de novo' UMP biosynthetic process"/>
    <property type="evidence" value="ECO:0007669"/>
    <property type="project" value="UniProtKB-UniRule"/>
</dbReference>
<dbReference type="CDD" id="cd04738">
    <property type="entry name" value="DHOD_2_like"/>
    <property type="match status" value="1"/>
</dbReference>
<dbReference type="FunFam" id="3.20.20.70:FF:000028">
    <property type="entry name" value="Dihydroorotate dehydrogenase (quinone)"/>
    <property type="match status" value="1"/>
</dbReference>
<dbReference type="Gene3D" id="3.20.20.70">
    <property type="entry name" value="Aldolase class I"/>
    <property type="match status" value="1"/>
</dbReference>
<dbReference type="HAMAP" id="MF_00225">
    <property type="entry name" value="DHO_dh_type2"/>
    <property type="match status" value="1"/>
</dbReference>
<dbReference type="InterPro" id="IPR013785">
    <property type="entry name" value="Aldolase_TIM"/>
</dbReference>
<dbReference type="InterPro" id="IPR050074">
    <property type="entry name" value="DHO_dehydrogenase"/>
</dbReference>
<dbReference type="InterPro" id="IPR012135">
    <property type="entry name" value="Dihydroorotate_DH_1_2"/>
</dbReference>
<dbReference type="InterPro" id="IPR005719">
    <property type="entry name" value="Dihydroorotate_DH_2"/>
</dbReference>
<dbReference type="InterPro" id="IPR005720">
    <property type="entry name" value="Dihydroorotate_DH_cat"/>
</dbReference>
<dbReference type="InterPro" id="IPR001295">
    <property type="entry name" value="Dihydroorotate_DH_CS"/>
</dbReference>
<dbReference type="NCBIfam" id="NF003644">
    <property type="entry name" value="PRK05286.1-1"/>
    <property type="match status" value="1"/>
</dbReference>
<dbReference type="NCBIfam" id="NF003645">
    <property type="entry name" value="PRK05286.1-2"/>
    <property type="match status" value="1"/>
</dbReference>
<dbReference type="NCBIfam" id="NF003646">
    <property type="entry name" value="PRK05286.1-4"/>
    <property type="match status" value="1"/>
</dbReference>
<dbReference type="NCBIfam" id="NF003652">
    <property type="entry name" value="PRK05286.2-5"/>
    <property type="match status" value="1"/>
</dbReference>
<dbReference type="NCBIfam" id="TIGR01036">
    <property type="entry name" value="pyrD_sub2"/>
    <property type="match status" value="1"/>
</dbReference>
<dbReference type="PANTHER" id="PTHR48109:SF4">
    <property type="entry name" value="DIHYDROOROTATE DEHYDROGENASE (QUINONE), MITOCHONDRIAL"/>
    <property type="match status" value="1"/>
</dbReference>
<dbReference type="PANTHER" id="PTHR48109">
    <property type="entry name" value="DIHYDROOROTATE DEHYDROGENASE (QUINONE), MITOCHONDRIAL-RELATED"/>
    <property type="match status" value="1"/>
</dbReference>
<dbReference type="Pfam" id="PF01180">
    <property type="entry name" value="DHO_dh"/>
    <property type="match status" value="1"/>
</dbReference>
<dbReference type="PIRSF" id="PIRSF000164">
    <property type="entry name" value="DHO_oxidase"/>
    <property type="match status" value="1"/>
</dbReference>
<dbReference type="SUPFAM" id="SSF51395">
    <property type="entry name" value="FMN-linked oxidoreductases"/>
    <property type="match status" value="1"/>
</dbReference>
<dbReference type="PROSITE" id="PS00911">
    <property type="entry name" value="DHODEHASE_1"/>
    <property type="match status" value="1"/>
</dbReference>
<dbReference type="PROSITE" id="PS00912">
    <property type="entry name" value="DHODEHASE_2"/>
    <property type="match status" value="1"/>
</dbReference>
<protein>
    <recommendedName>
        <fullName evidence="1">Dihydroorotate dehydrogenase (quinone)</fullName>
        <ecNumber evidence="1">1.3.5.2</ecNumber>
    </recommendedName>
    <alternativeName>
        <fullName evidence="1">DHOdehase</fullName>
        <shortName evidence="1">DHOD</shortName>
        <shortName evidence="1">DHODase</shortName>
    </alternativeName>
    <alternativeName>
        <fullName evidence="1">Dihydroorotate oxidase</fullName>
    </alternativeName>
</protein>
<reference key="1">
    <citation type="submission" date="2007-02" db="EMBL/GenBank/DDBJ databases">
        <title>Complete sequence of chromosome of Shewanella baltica OS155.</title>
        <authorList>
            <consortium name="US DOE Joint Genome Institute"/>
            <person name="Copeland A."/>
            <person name="Lucas S."/>
            <person name="Lapidus A."/>
            <person name="Barry K."/>
            <person name="Detter J.C."/>
            <person name="Glavina del Rio T."/>
            <person name="Hammon N."/>
            <person name="Israni S."/>
            <person name="Dalin E."/>
            <person name="Tice H."/>
            <person name="Pitluck S."/>
            <person name="Sims D.R."/>
            <person name="Brettin T."/>
            <person name="Bruce D."/>
            <person name="Han C."/>
            <person name="Tapia R."/>
            <person name="Brainard J."/>
            <person name="Schmutz J."/>
            <person name="Larimer F."/>
            <person name="Land M."/>
            <person name="Hauser L."/>
            <person name="Kyrpides N."/>
            <person name="Mikhailova N."/>
            <person name="Brettar I."/>
            <person name="Klappenbach J."/>
            <person name="Konstantinidis K."/>
            <person name="Rodrigues J."/>
            <person name="Tiedje J."/>
            <person name="Richardson P."/>
        </authorList>
    </citation>
    <scope>NUCLEOTIDE SEQUENCE [LARGE SCALE GENOMIC DNA]</scope>
    <source>
        <strain>OS155 / ATCC BAA-1091</strain>
    </source>
</reference>
<gene>
    <name evidence="1" type="primary">pyrD</name>
    <name type="ordered locus">Sbal_2439</name>
</gene>
<feature type="chain" id="PRO_1000024220" description="Dihydroorotate dehydrogenase (quinone)">
    <location>
        <begin position="1"/>
        <end position="339"/>
    </location>
</feature>
<feature type="active site" description="Nucleophile" evidence="1">
    <location>
        <position position="175"/>
    </location>
</feature>
<feature type="binding site" evidence="1">
    <location>
        <begin position="62"/>
        <end position="66"/>
    </location>
    <ligand>
        <name>FMN</name>
        <dbReference type="ChEBI" id="CHEBI:58210"/>
    </ligand>
</feature>
<feature type="binding site" evidence="1">
    <location>
        <position position="66"/>
    </location>
    <ligand>
        <name>substrate</name>
    </ligand>
</feature>
<feature type="binding site" evidence="1">
    <location>
        <position position="86"/>
    </location>
    <ligand>
        <name>FMN</name>
        <dbReference type="ChEBI" id="CHEBI:58210"/>
    </ligand>
</feature>
<feature type="binding site" evidence="1">
    <location>
        <begin position="111"/>
        <end position="115"/>
    </location>
    <ligand>
        <name>substrate</name>
    </ligand>
</feature>
<feature type="binding site" evidence="1">
    <location>
        <position position="139"/>
    </location>
    <ligand>
        <name>FMN</name>
        <dbReference type="ChEBI" id="CHEBI:58210"/>
    </ligand>
</feature>
<feature type="binding site" evidence="1">
    <location>
        <position position="172"/>
    </location>
    <ligand>
        <name>FMN</name>
        <dbReference type="ChEBI" id="CHEBI:58210"/>
    </ligand>
</feature>
<feature type="binding site" evidence="1">
    <location>
        <position position="172"/>
    </location>
    <ligand>
        <name>substrate</name>
    </ligand>
</feature>
<feature type="binding site" evidence="1">
    <location>
        <position position="177"/>
    </location>
    <ligand>
        <name>substrate</name>
    </ligand>
</feature>
<feature type="binding site" evidence="1">
    <location>
        <position position="217"/>
    </location>
    <ligand>
        <name>FMN</name>
        <dbReference type="ChEBI" id="CHEBI:58210"/>
    </ligand>
</feature>
<feature type="binding site" evidence="1">
    <location>
        <position position="245"/>
    </location>
    <ligand>
        <name>FMN</name>
        <dbReference type="ChEBI" id="CHEBI:58210"/>
    </ligand>
</feature>
<feature type="binding site" evidence="1">
    <location>
        <begin position="246"/>
        <end position="247"/>
    </location>
    <ligand>
        <name>substrate</name>
    </ligand>
</feature>
<feature type="binding site" evidence="1">
    <location>
        <position position="268"/>
    </location>
    <ligand>
        <name>FMN</name>
        <dbReference type="ChEBI" id="CHEBI:58210"/>
    </ligand>
</feature>
<feature type="binding site" evidence="1">
    <location>
        <position position="297"/>
    </location>
    <ligand>
        <name>FMN</name>
        <dbReference type="ChEBI" id="CHEBI:58210"/>
    </ligand>
</feature>
<feature type="binding site" evidence="1">
    <location>
        <begin position="318"/>
        <end position="319"/>
    </location>
    <ligand>
        <name>FMN</name>
        <dbReference type="ChEBI" id="CHEBI:58210"/>
    </ligand>
</feature>